<name>Y1850_HALH5</name>
<organism>
    <name type="scientific">Halalkalibacterium halodurans (strain ATCC BAA-125 / DSM 18197 / FERM 7344 / JCM 9153 / C-125)</name>
    <name type="common">Bacillus halodurans</name>
    <dbReference type="NCBI Taxonomy" id="272558"/>
    <lineage>
        <taxon>Bacteria</taxon>
        <taxon>Bacillati</taxon>
        <taxon>Bacillota</taxon>
        <taxon>Bacilli</taxon>
        <taxon>Bacillales</taxon>
        <taxon>Bacillaceae</taxon>
        <taxon>Halalkalibacterium (ex Joshi et al. 2022)</taxon>
    </lineage>
</organism>
<sequence>MVSVLDKINVTELRPGNMLLQQPPFLFVDRILEFDEETITCSKYLSHNEPFFSGHFPTQPIMPGVLIIEFAAQASLLLTMLQLNELEPLMGYLVKTENFTFHALAEPGTELEAKVKMLKKMGNYYTTQVTVRRSDNKKKVAKGQLVFYLDEEGKER</sequence>
<reference key="1">
    <citation type="journal article" date="1999" name="Extremophiles">
        <title>Genetic analysis of the chromosome of alkaliphilic Bacillus halodurans C-125.</title>
        <authorList>
            <person name="Takami H."/>
            <person name="Takaki Y."/>
            <person name="Nakasone K."/>
            <person name="Sakiyama T."/>
            <person name="Maeno G."/>
            <person name="Sasaki R."/>
            <person name="Hirama C."/>
            <person name="Fuji F."/>
            <person name="Masui N."/>
        </authorList>
    </citation>
    <scope>NUCLEOTIDE SEQUENCE [GENOMIC DNA]</scope>
    <source>
        <strain>ATCC BAA-125 / DSM 18197 / FERM 7344 / JCM 9153 / C-125</strain>
    </source>
</reference>
<reference key="2">
    <citation type="journal article" date="2000" name="Nucleic Acids Res.">
        <title>Complete genome sequence of the alkaliphilic bacterium Bacillus halodurans and genomic sequence comparison with Bacillus subtilis.</title>
        <authorList>
            <person name="Takami H."/>
            <person name="Nakasone K."/>
            <person name="Takaki Y."/>
            <person name="Maeno G."/>
            <person name="Sasaki R."/>
            <person name="Masui N."/>
            <person name="Fuji F."/>
            <person name="Hirama C."/>
            <person name="Nakamura Y."/>
            <person name="Ogasawara N."/>
            <person name="Kuhara S."/>
            <person name="Horikoshi K."/>
        </authorList>
    </citation>
    <scope>NUCLEOTIDE SEQUENCE [LARGE SCALE GENOMIC DNA]</scope>
    <source>
        <strain>ATCC BAA-125 / DSM 18197 / FERM 7344 / JCM 9153 / C-125</strain>
    </source>
</reference>
<proteinExistence type="inferred from homology"/>
<feature type="chain" id="PRO_0000091772" description="Uncharacterized thioester dehydrase BH1850">
    <location>
        <begin position="1"/>
        <end position="156"/>
    </location>
</feature>
<feature type="active site" evidence="1">
    <location>
        <position position="55"/>
    </location>
</feature>
<keyword id="KW-0456">Lyase</keyword>
<keyword id="KW-1185">Reference proteome</keyword>
<gene>
    <name type="ordered locus">BH1850</name>
</gene>
<protein>
    <recommendedName>
        <fullName>Uncharacterized thioester dehydrase BH1850</fullName>
        <ecNumber>4.2.1.-</ecNumber>
    </recommendedName>
</protein>
<accession>Q9RC57</accession>
<evidence type="ECO:0000250" key="1"/>
<evidence type="ECO:0000305" key="2"/>
<comment type="similarity">
    <text evidence="2">Belongs to the thioester dehydratase family. FabZ subfamily.</text>
</comment>
<dbReference type="EC" id="4.2.1.-"/>
<dbReference type="EMBL" id="AB024560">
    <property type="protein sequence ID" value="BAA83942.1"/>
    <property type="molecule type" value="Genomic_DNA"/>
</dbReference>
<dbReference type="EMBL" id="BA000004">
    <property type="protein sequence ID" value="BAB05569.1"/>
    <property type="molecule type" value="Genomic_DNA"/>
</dbReference>
<dbReference type="PIR" id="B83881">
    <property type="entry name" value="B83881"/>
</dbReference>
<dbReference type="RefSeq" id="WP_010898011.1">
    <property type="nucleotide sequence ID" value="NC_002570.2"/>
</dbReference>
<dbReference type="SMR" id="Q9RC57"/>
<dbReference type="STRING" id="272558.gene:10727748"/>
<dbReference type="KEGG" id="bha:BH1850"/>
<dbReference type="eggNOG" id="COG0764">
    <property type="taxonomic scope" value="Bacteria"/>
</dbReference>
<dbReference type="HOGENOM" id="CLU_078912_3_2_9"/>
<dbReference type="OrthoDB" id="9772788at2"/>
<dbReference type="Proteomes" id="UP000001258">
    <property type="component" value="Chromosome"/>
</dbReference>
<dbReference type="GO" id="GO:0016829">
    <property type="term" value="F:lyase activity"/>
    <property type="evidence" value="ECO:0007669"/>
    <property type="project" value="UniProtKB-KW"/>
</dbReference>
<dbReference type="CDD" id="cd01288">
    <property type="entry name" value="FabZ"/>
    <property type="match status" value="1"/>
</dbReference>
<dbReference type="Gene3D" id="3.10.129.10">
    <property type="entry name" value="Hotdog Thioesterase"/>
    <property type="match status" value="1"/>
</dbReference>
<dbReference type="InterPro" id="IPR013114">
    <property type="entry name" value="FabA_FabZ"/>
</dbReference>
<dbReference type="InterPro" id="IPR029069">
    <property type="entry name" value="HotDog_dom_sf"/>
</dbReference>
<dbReference type="PANTHER" id="PTHR30272">
    <property type="entry name" value="3-HYDROXYACYL-[ACYL-CARRIER-PROTEIN] DEHYDRATASE"/>
    <property type="match status" value="1"/>
</dbReference>
<dbReference type="PANTHER" id="PTHR30272:SF1">
    <property type="entry name" value="3-HYDROXYACYL-[ACYL-CARRIER-PROTEIN] DEHYDRATASE"/>
    <property type="match status" value="1"/>
</dbReference>
<dbReference type="Pfam" id="PF07977">
    <property type="entry name" value="FabA"/>
    <property type="match status" value="1"/>
</dbReference>
<dbReference type="SUPFAM" id="SSF54637">
    <property type="entry name" value="Thioesterase/thiol ester dehydrase-isomerase"/>
    <property type="match status" value="1"/>
</dbReference>